<name>EFTS_PROM0</name>
<gene>
    <name evidence="1" type="primary">tsf</name>
    <name type="ordered locus">P9301_08141</name>
</gene>
<evidence type="ECO:0000255" key="1">
    <source>
        <dbReference type="HAMAP-Rule" id="MF_00050"/>
    </source>
</evidence>
<organism>
    <name type="scientific">Prochlorococcus marinus (strain MIT 9301)</name>
    <dbReference type="NCBI Taxonomy" id="167546"/>
    <lineage>
        <taxon>Bacteria</taxon>
        <taxon>Bacillati</taxon>
        <taxon>Cyanobacteriota</taxon>
        <taxon>Cyanophyceae</taxon>
        <taxon>Synechococcales</taxon>
        <taxon>Prochlorococcaceae</taxon>
        <taxon>Prochlorococcus</taxon>
    </lineage>
</organism>
<accession>A3PCG2</accession>
<sequence>MGNITAKLVKDLRDKTGAGMMDCKKALNETEGNLDKALEWLRKKGIASAEKKSGRVAAEGSIGSYIHTGSRVGVLLELNCETDFVARGDIFQSLLKDVSMQVAACPNVEYVSIDEIPEEVVEKEKQIEMGRDDLSGKPEQIKEKIVEGRIAKRLNELVLLSQPYIKDSSLTVEDLVKQAAAKIGENIKVRRFTRYTLGEGIEKNQIDFAEEVASMQTN</sequence>
<proteinExistence type="inferred from homology"/>
<comment type="function">
    <text evidence="1">Associates with the EF-Tu.GDP complex and induces the exchange of GDP to GTP. It remains bound to the aminoacyl-tRNA.EF-Tu.GTP complex up to the GTP hydrolysis stage on the ribosome.</text>
</comment>
<comment type="subcellular location">
    <subcellularLocation>
        <location evidence="1">Cytoplasm</location>
    </subcellularLocation>
</comment>
<comment type="similarity">
    <text evidence="1">Belongs to the EF-Ts family.</text>
</comment>
<keyword id="KW-0963">Cytoplasm</keyword>
<keyword id="KW-0251">Elongation factor</keyword>
<keyword id="KW-0648">Protein biosynthesis</keyword>
<keyword id="KW-1185">Reference proteome</keyword>
<feature type="chain" id="PRO_1000006145" description="Elongation factor Ts">
    <location>
        <begin position="1"/>
        <end position="218"/>
    </location>
</feature>
<feature type="region of interest" description="Involved in Mg(2+) ion dislocation from EF-Tu" evidence="1">
    <location>
        <begin position="82"/>
        <end position="85"/>
    </location>
</feature>
<dbReference type="EMBL" id="CP000576">
    <property type="protein sequence ID" value="ABO17437.1"/>
    <property type="molecule type" value="Genomic_DNA"/>
</dbReference>
<dbReference type="RefSeq" id="WP_011862791.1">
    <property type="nucleotide sequence ID" value="NC_009091.1"/>
</dbReference>
<dbReference type="SMR" id="A3PCG2"/>
<dbReference type="STRING" id="167546.P9301_08141"/>
<dbReference type="KEGG" id="pmg:P9301_08141"/>
<dbReference type="eggNOG" id="COG0264">
    <property type="taxonomic scope" value="Bacteria"/>
</dbReference>
<dbReference type="HOGENOM" id="CLU_047155_1_1_3"/>
<dbReference type="OrthoDB" id="9808348at2"/>
<dbReference type="Proteomes" id="UP000001430">
    <property type="component" value="Chromosome"/>
</dbReference>
<dbReference type="GO" id="GO:0005737">
    <property type="term" value="C:cytoplasm"/>
    <property type="evidence" value="ECO:0007669"/>
    <property type="project" value="UniProtKB-SubCell"/>
</dbReference>
<dbReference type="GO" id="GO:0003746">
    <property type="term" value="F:translation elongation factor activity"/>
    <property type="evidence" value="ECO:0007669"/>
    <property type="project" value="UniProtKB-UniRule"/>
</dbReference>
<dbReference type="CDD" id="cd14275">
    <property type="entry name" value="UBA_EF-Ts"/>
    <property type="match status" value="1"/>
</dbReference>
<dbReference type="FunFam" id="1.10.286.20:FF:000001">
    <property type="entry name" value="Elongation factor Ts"/>
    <property type="match status" value="1"/>
</dbReference>
<dbReference type="FunFam" id="1.10.8.10:FF:000001">
    <property type="entry name" value="Elongation factor Ts"/>
    <property type="match status" value="1"/>
</dbReference>
<dbReference type="Gene3D" id="1.10.286.20">
    <property type="match status" value="1"/>
</dbReference>
<dbReference type="Gene3D" id="1.10.8.10">
    <property type="entry name" value="DNA helicase RuvA subunit, C-terminal domain"/>
    <property type="match status" value="1"/>
</dbReference>
<dbReference type="Gene3D" id="3.30.479.20">
    <property type="entry name" value="Elongation factor Ts, dimerisation domain"/>
    <property type="match status" value="1"/>
</dbReference>
<dbReference type="HAMAP" id="MF_00050">
    <property type="entry name" value="EF_Ts"/>
    <property type="match status" value="1"/>
</dbReference>
<dbReference type="InterPro" id="IPR036402">
    <property type="entry name" value="EF-Ts_dimer_sf"/>
</dbReference>
<dbReference type="InterPro" id="IPR001816">
    <property type="entry name" value="Transl_elong_EFTs/EF1B"/>
</dbReference>
<dbReference type="InterPro" id="IPR014039">
    <property type="entry name" value="Transl_elong_EFTs/EF1B_dimer"/>
</dbReference>
<dbReference type="InterPro" id="IPR018101">
    <property type="entry name" value="Transl_elong_Ts_CS"/>
</dbReference>
<dbReference type="InterPro" id="IPR009060">
    <property type="entry name" value="UBA-like_sf"/>
</dbReference>
<dbReference type="NCBIfam" id="TIGR00116">
    <property type="entry name" value="tsf"/>
    <property type="match status" value="2"/>
</dbReference>
<dbReference type="PANTHER" id="PTHR11741">
    <property type="entry name" value="ELONGATION FACTOR TS"/>
    <property type="match status" value="1"/>
</dbReference>
<dbReference type="PANTHER" id="PTHR11741:SF10">
    <property type="entry name" value="POLYPROTEIN OF EF-TS, CHLOROPLASTIC"/>
    <property type="match status" value="1"/>
</dbReference>
<dbReference type="Pfam" id="PF00889">
    <property type="entry name" value="EF_TS"/>
    <property type="match status" value="1"/>
</dbReference>
<dbReference type="SUPFAM" id="SSF54713">
    <property type="entry name" value="Elongation factor Ts (EF-Ts), dimerisation domain"/>
    <property type="match status" value="1"/>
</dbReference>
<dbReference type="SUPFAM" id="SSF46934">
    <property type="entry name" value="UBA-like"/>
    <property type="match status" value="1"/>
</dbReference>
<dbReference type="PROSITE" id="PS01126">
    <property type="entry name" value="EF_TS_1"/>
    <property type="match status" value="1"/>
</dbReference>
<dbReference type="PROSITE" id="PS01127">
    <property type="entry name" value="EF_TS_2"/>
    <property type="match status" value="1"/>
</dbReference>
<reference key="1">
    <citation type="journal article" date="2007" name="PLoS Genet.">
        <title>Patterns and implications of gene gain and loss in the evolution of Prochlorococcus.</title>
        <authorList>
            <person name="Kettler G.C."/>
            <person name="Martiny A.C."/>
            <person name="Huang K."/>
            <person name="Zucker J."/>
            <person name="Coleman M.L."/>
            <person name="Rodrigue S."/>
            <person name="Chen F."/>
            <person name="Lapidus A."/>
            <person name="Ferriera S."/>
            <person name="Johnson J."/>
            <person name="Steglich C."/>
            <person name="Church G.M."/>
            <person name="Richardson P."/>
            <person name="Chisholm S.W."/>
        </authorList>
    </citation>
    <scope>NUCLEOTIDE SEQUENCE [LARGE SCALE GENOMIC DNA]</scope>
    <source>
        <strain>MIT 9301</strain>
    </source>
</reference>
<protein>
    <recommendedName>
        <fullName evidence="1">Elongation factor Ts</fullName>
        <shortName evidence="1">EF-Ts</shortName>
    </recommendedName>
</protein>